<gene>
    <name evidence="1" type="primary">rps27e</name>
    <name type="ordered locus">Mpal_0956</name>
</gene>
<sequence>MVRLYRENRSKFYRVKCPDCENEQIIFEKASTVVDCVVCGHVLAEPRGGRAALKAEILAELE</sequence>
<evidence type="ECO:0000255" key="1">
    <source>
        <dbReference type="HAMAP-Rule" id="MF_00371"/>
    </source>
</evidence>
<evidence type="ECO:0000305" key="2"/>
<name>RS27_METPE</name>
<reference key="1">
    <citation type="journal article" date="2015" name="Genome Announc.">
        <title>Complete Genome Sequence of Methanosphaerula palustris E1-9CT, a Hydrogenotrophic Methanogen Isolated from a Minerotrophic Fen Peatland.</title>
        <authorList>
            <person name="Cadillo-Quiroz H."/>
            <person name="Browne P."/>
            <person name="Kyrpides N."/>
            <person name="Woyke T."/>
            <person name="Goodwin L."/>
            <person name="Detter C."/>
            <person name="Yavitt J.B."/>
            <person name="Zinder S.H."/>
        </authorList>
    </citation>
    <scope>NUCLEOTIDE SEQUENCE [LARGE SCALE GENOMIC DNA]</scope>
    <source>
        <strain>ATCC BAA-1556 / DSM 19958 / E1-9c</strain>
    </source>
</reference>
<dbReference type="EMBL" id="CP001338">
    <property type="protein sequence ID" value="ACL16308.1"/>
    <property type="molecule type" value="Genomic_DNA"/>
</dbReference>
<dbReference type="RefSeq" id="WP_012617627.1">
    <property type="nucleotide sequence ID" value="NC_011832.1"/>
</dbReference>
<dbReference type="SMR" id="B8GGQ3"/>
<dbReference type="STRING" id="521011.Mpal_0956"/>
<dbReference type="GeneID" id="7272449"/>
<dbReference type="KEGG" id="mpl:Mpal_0956"/>
<dbReference type="eggNOG" id="arCOG04108">
    <property type="taxonomic scope" value="Archaea"/>
</dbReference>
<dbReference type="HOGENOM" id="CLU_199465_0_0_2"/>
<dbReference type="OrthoDB" id="5718at2157"/>
<dbReference type="Proteomes" id="UP000002457">
    <property type="component" value="Chromosome"/>
</dbReference>
<dbReference type="GO" id="GO:1990904">
    <property type="term" value="C:ribonucleoprotein complex"/>
    <property type="evidence" value="ECO:0007669"/>
    <property type="project" value="UniProtKB-KW"/>
</dbReference>
<dbReference type="GO" id="GO:0005840">
    <property type="term" value="C:ribosome"/>
    <property type="evidence" value="ECO:0007669"/>
    <property type="project" value="UniProtKB-KW"/>
</dbReference>
<dbReference type="GO" id="GO:0003735">
    <property type="term" value="F:structural constituent of ribosome"/>
    <property type="evidence" value="ECO:0007669"/>
    <property type="project" value="InterPro"/>
</dbReference>
<dbReference type="GO" id="GO:0008270">
    <property type="term" value="F:zinc ion binding"/>
    <property type="evidence" value="ECO:0007669"/>
    <property type="project" value="UniProtKB-UniRule"/>
</dbReference>
<dbReference type="GO" id="GO:0006412">
    <property type="term" value="P:translation"/>
    <property type="evidence" value="ECO:0007669"/>
    <property type="project" value="UniProtKB-UniRule"/>
</dbReference>
<dbReference type="Gene3D" id="2.20.25.100">
    <property type="entry name" value="Zn-binding ribosomal proteins"/>
    <property type="match status" value="1"/>
</dbReference>
<dbReference type="HAMAP" id="MF_00371">
    <property type="entry name" value="Ribosomal_eS27"/>
    <property type="match status" value="1"/>
</dbReference>
<dbReference type="InterPro" id="IPR000592">
    <property type="entry name" value="Ribosomal_eS27"/>
</dbReference>
<dbReference type="InterPro" id="IPR023407">
    <property type="entry name" value="Ribosomal_eS27_Zn-bd_dom_sf"/>
</dbReference>
<dbReference type="InterPro" id="IPR011332">
    <property type="entry name" value="Ribosomal_zn-bd"/>
</dbReference>
<dbReference type="NCBIfam" id="NF001629">
    <property type="entry name" value="PRK00415.1"/>
    <property type="match status" value="1"/>
</dbReference>
<dbReference type="PANTHER" id="PTHR11594">
    <property type="entry name" value="40S RIBOSOMAL PROTEIN S27"/>
    <property type="match status" value="1"/>
</dbReference>
<dbReference type="Pfam" id="PF01667">
    <property type="entry name" value="Ribosomal_S27e"/>
    <property type="match status" value="1"/>
</dbReference>
<dbReference type="SUPFAM" id="SSF57829">
    <property type="entry name" value="Zn-binding ribosomal proteins"/>
    <property type="match status" value="1"/>
</dbReference>
<protein>
    <recommendedName>
        <fullName evidence="1">Small ribosomal subunit protein eS27</fullName>
    </recommendedName>
    <alternativeName>
        <fullName evidence="2">30S ribosomal protein S27e</fullName>
    </alternativeName>
</protein>
<organism>
    <name type="scientific">Methanosphaerula palustris (strain ATCC BAA-1556 / DSM 19958 / E1-9c)</name>
    <dbReference type="NCBI Taxonomy" id="521011"/>
    <lineage>
        <taxon>Archaea</taxon>
        <taxon>Methanobacteriati</taxon>
        <taxon>Methanobacteriota</taxon>
        <taxon>Stenosarchaea group</taxon>
        <taxon>Methanomicrobia</taxon>
        <taxon>Methanomicrobiales</taxon>
        <taxon>Methanoregulaceae</taxon>
        <taxon>Methanosphaerula</taxon>
    </lineage>
</organism>
<proteinExistence type="inferred from homology"/>
<keyword id="KW-0479">Metal-binding</keyword>
<keyword id="KW-1185">Reference proteome</keyword>
<keyword id="KW-0687">Ribonucleoprotein</keyword>
<keyword id="KW-0689">Ribosomal protein</keyword>
<keyword id="KW-0862">Zinc</keyword>
<keyword id="KW-0863">Zinc-finger</keyword>
<accession>B8GGQ3</accession>
<comment type="cofactor">
    <cofactor evidence="1">
        <name>Zn(2+)</name>
        <dbReference type="ChEBI" id="CHEBI:29105"/>
    </cofactor>
    <text evidence="1">Binds 1 zinc ion per subunit.</text>
</comment>
<comment type="subunit">
    <text evidence="1">Part of the 30S ribosomal subunit.</text>
</comment>
<comment type="similarity">
    <text evidence="1">Belongs to the eukaryotic ribosomal protein eS27 family.</text>
</comment>
<feature type="chain" id="PRO_1000194307" description="Small ribosomal subunit protein eS27">
    <location>
        <begin position="1"/>
        <end position="62"/>
    </location>
</feature>
<feature type="zinc finger region" description="C4-type" evidence="1">
    <location>
        <begin position="17"/>
        <end position="39"/>
    </location>
</feature>
<feature type="binding site" evidence="1">
    <location>
        <position position="17"/>
    </location>
    <ligand>
        <name>Zn(2+)</name>
        <dbReference type="ChEBI" id="CHEBI:29105"/>
    </ligand>
</feature>
<feature type="binding site" evidence="1">
    <location>
        <position position="20"/>
    </location>
    <ligand>
        <name>Zn(2+)</name>
        <dbReference type="ChEBI" id="CHEBI:29105"/>
    </ligand>
</feature>
<feature type="binding site" evidence="1">
    <location>
        <position position="36"/>
    </location>
    <ligand>
        <name>Zn(2+)</name>
        <dbReference type="ChEBI" id="CHEBI:29105"/>
    </ligand>
</feature>
<feature type="binding site" evidence="1">
    <location>
        <position position="39"/>
    </location>
    <ligand>
        <name>Zn(2+)</name>
        <dbReference type="ChEBI" id="CHEBI:29105"/>
    </ligand>
</feature>